<organism>
    <name type="scientific">Salinispora arenicola (strain CNS-205)</name>
    <dbReference type="NCBI Taxonomy" id="391037"/>
    <lineage>
        <taxon>Bacteria</taxon>
        <taxon>Bacillati</taxon>
        <taxon>Actinomycetota</taxon>
        <taxon>Actinomycetes</taxon>
        <taxon>Micromonosporales</taxon>
        <taxon>Micromonosporaceae</taxon>
        <taxon>Salinispora</taxon>
    </lineage>
</organism>
<feature type="chain" id="PRO_1000083594" description="Cobalt-precorrin-5B C(1)-methyltransferase">
    <location>
        <begin position="1"/>
        <end position="380"/>
    </location>
</feature>
<protein>
    <recommendedName>
        <fullName evidence="1">Cobalt-precorrin-5B C(1)-methyltransferase</fullName>
        <ecNumber evidence="1">2.1.1.195</ecNumber>
    </recommendedName>
    <alternativeName>
        <fullName evidence="1">Cobalt-precorrin-6A synthase</fullName>
    </alternativeName>
</protein>
<sequence length="380" mass="38769">MGYDLPPLREPDLPRTAKVRPVALRTGWTTGACATAAAKAALTALVTGVAPAEVEIGLPAGRRVRFPVARCDRRDEGAEAVVVKDAGDDPDVTHGAELTATVGWRPVPGLALEGGPGVGTVTKPGLGLAVGGPAINDTPRRMIGEAVAEVVDLTAVGVRVVISVPRGEIMARKTTNRRLGIVGGISILGTTGIVRPFSTASWRASVVQAVQVAAAQGERTVVLCTGGRTERGARALLPELPEVCFVEVGDFTGAAVTAAVTHGLSGVAFVGMAGKLAKLAAGVLMTHYTRSKVDLSLLGAVTAEAGGTADLATAVTAANTGRHAYELWEAAGLLGPAGDLLCSRVRAVLRRFAGDAVAVDVAMVDFTGARVVASSGRWAR</sequence>
<comment type="function">
    <text evidence="1">Catalyzes the methylation of C-1 in cobalt-precorrin-5B to form cobalt-precorrin-6A.</text>
</comment>
<comment type="catalytic activity">
    <reaction evidence="1">
        <text>Co-precorrin-5B + S-adenosyl-L-methionine = Co-precorrin-6A + S-adenosyl-L-homocysteine</text>
        <dbReference type="Rhea" id="RHEA:26285"/>
        <dbReference type="ChEBI" id="CHEBI:57856"/>
        <dbReference type="ChEBI" id="CHEBI:59789"/>
        <dbReference type="ChEBI" id="CHEBI:60063"/>
        <dbReference type="ChEBI" id="CHEBI:60064"/>
        <dbReference type="EC" id="2.1.1.195"/>
    </reaction>
</comment>
<comment type="pathway">
    <text evidence="1">Cofactor biosynthesis; adenosylcobalamin biosynthesis; cob(II)yrinate a,c-diamide from sirohydrochlorin (anaerobic route): step 6/10.</text>
</comment>
<comment type="similarity">
    <text evidence="1">Belongs to the CbiD family.</text>
</comment>
<evidence type="ECO:0000255" key="1">
    <source>
        <dbReference type="HAMAP-Rule" id="MF_00787"/>
    </source>
</evidence>
<proteinExistence type="inferred from homology"/>
<accession>A8M4X3</accession>
<keyword id="KW-0169">Cobalamin biosynthesis</keyword>
<keyword id="KW-0489">Methyltransferase</keyword>
<keyword id="KW-0949">S-adenosyl-L-methionine</keyword>
<keyword id="KW-0808">Transferase</keyword>
<reference key="1">
    <citation type="submission" date="2007-10" db="EMBL/GenBank/DDBJ databases">
        <title>Complete sequence of Salinispora arenicola CNS-205.</title>
        <authorList>
            <consortium name="US DOE Joint Genome Institute"/>
            <person name="Copeland A."/>
            <person name="Lucas S."/>
            <person name="Lapidus A."/>
            <person name="Barry K."/>
            <person name="Glavina del Rio T."/>
            <person name="Dalin E."/>
            <person name="Tice H."/>
            <person name="Pitluck S."/>
            <person name="Foster B."/>
            <person name="Schmutz J."/>
            <person name="Larimer F."/>
            <person name="Land M."/>
            <person name="Hauser L."/>
            <person name="Kyrpides N."/>
            <person name="Ivanova N."/>
            <person name="Jensen P.R."/>
            <person name="Moore B.S."/>
            <person name="Penn K."/>
            <person name="Jenkins C."/>
            <person name="Udwary D."/>
            <person name="Xiang L."/>
            <person name="Gontang E."/>
            <person name="Richardson P."/>
        </authorList>
    </citation>
    <scope>NUCLEOTIDE SEQUENCE [LARGE SCALE GENOMIC DNA]</scope>
    <source>
        <strain>CNS-205</strain>
    </source>
</reference>
<name>CBID_SALAI</name>
<dbReference type="EC" id="2.1.1.195" evidence="1"/>
<dbReference type="EMBL" id="CP000850">
    <property type="protein sequence ID" value="ABV98541.1"/>
    <property type="molecule type" value="Genomic_DNA"/>
</dbReference>
<dbReference type="SMR" id="A8M4X3"/>
<dbReference type="STRING" id="391037.Sare_2704"/>
<dbReference type="KEGG" id="saq:Sare_2704"/>
<dbReference type="PATRIC" id="fig|391037.6.peg.2740"/>
<dbReference type="eggNOG" id="COG1903">
    <property type="taxonomic scope" value="Bacteria"/>
</dbReference>
<dbReference type="HOGENOM" id="CLU_041273_0_0_11"/>
<dbReference type="OrthoDB" id="6439987at2"/>
<dbReference type="UniPathway" id="UPA00148">
    <property type="reaction ID" value="UER00227"/>
</dbReference>
<dbReference type="GO" id="GO:0043780">
    <property type="term" value="F:cobalt-precorrin-5B C1-methyltransferase activity"/>
    <property type="evidence" value="ECO:0007669"/>
    <property type="project" value="RHEA"/>
</dbReference>
<dbReference type="GO" id="GO:0019251">
    <property type="term" value="P:anaerobic cobalamin biosynthetic process"/>
    <property type="evidence" value="ECO:0007669"/>
    <property type="project" value="UniProtKB-UniRule"/>
</dbReference>
<dbReference type="GO" id="GO:0032259">
    <property type="term" value="P:methylation"/>
    <property type="evidence" value="ECO:0007669"/>
    <property type="project" value="UniProtKB-KW"/>
</dbReference>
<dbReference type="Gene3D" id="3.30.2110.10">
    <property type="entry name" value="CbiD-like"/>
    <property type="match status" value="1"/>
</dbReference>
<dbReference type="HAMAP" id="MF_00787">
    <property type="entry name" value="CbiD"/>
    <property type="match status" value="1"/>
</dbReference>
<dbReference type="InterPro" id="IPR002748">
    <property type="entry name" value="CbiD"/>
</dbReference>
<dbReference type="InterPro" id="IPR036074">
    <property type="entry name" value="CbiD_sf"/>
</dbReference>
<dbReference type="NCBIfam" id="TIGR00312">
    <property type="entry name" value="cbiD"/>
    <property type="match status" value="1"/>
</dbReference>
<dbReference type="NCBIfam" id="NF000849">
    <property type="entry name" value="PRK00075.1-1"/>
    <property type="match status" value="1"/>
</dbReference>
<dbReference type="PANTHER" id="PTHR35863">
    <property type="entry name" value="COBALT-PRECORRIN-5B C(1)-METHYLTRANSFERASE"/>
    <property type="match status" value="1"/>
</dbReference>
<dbReference type="PANTHER" id="PTHR35863:SF1">
    <property type="entry name" value="COBALT-PRECORRIN-5B C(1)-METHYLTRANSFERASE"/>
    <property type="match status" value="1"/>
</dbReference>
<dbReference type="Pfam" id="PF01888">
    <property type="entry name" value="CbiD"/>
    <property type="match status" value="1"/>
</dbReference>
<dbReference type="PIRSF" id="PIRSF026782">
    <property type="entry name" value="CbiD"/>
    <property type="match status" value="1"/>
</dbReference>
<dbReference type="SUPFAM" id="SSF111342">
    <property type="entry name" value="CbiD-like"/>
    <property type="match status" value="1"/>
</dbReference>
<gene>
    <name evidence="1" type="primary">cbiD</name>
    <name type="ordered locus">Sare_2704</name>
</gene>